<comment type="subcellular location">
    <subcellularLocation>
        <location evidence="1">Cell membrane</location>
        <topology evidence="1">Lipid-anchor</topology>
    </subcellularLocation>
</comment>
<comment type="similarity">
    <text evidence="2">Belongs to the MG067/MG068/MG395 family.</text>
</comment>
<protein>
    <recommendedName>
        <fullName>Uncharacterized lipoprotein MG067</fullName>
    </recommendedName>
</protein>
<keyword id="KW-1003">Cell membrane</keyword>
<keyword id="KW-0449">Lipoprotein</keyword>
<keyword id="KW-0472">Membrane</keyword>
<keyword id="KW-0564">Palmitate</keyword>
<keyword id="KW-1185">Reference proteome</keyword>
<keyword id="KW-0732">Signal</keyword>
<evidence type="ECO:0000255" key="1">
    <source>
        <dbReference type="PROSITE-ProRule" id="PRU00303"/>
    </source>
</evidence>
<evidence type="ECO:0000305" key="2"/>
<organism>
    <name type="scientific">Mycoplasma genitalium (strain ATCC 33530 / DSM 19775 / NCTC 10195 / G37)</name>
    <name type="common">Mycoplasmoides genitalium</name>
    <dbReference type="NCBI Taxonomy" id="243273"/>
    <lineage>
        <taxon>Bacteria</taxon>
        <taxon>Bacillati</taxon>
        <taxon>Mycoplasmatota</taxon>
        <taxon>Mycoplasmoidales</taxon>
        <taxon>Mycoplasmoidaceae</taxon>
        <taxon>Mycoplasmoides</taxon>
    </lineage>
</organism>
<dbReference type="EMBL" id="L43967">
    <property type="protein sequence ID" value="AAC71285.1"/>
    <property type="molecule type" value="Genomic_DNA"/>
</dbReference>
<dbReference type="PIR" id="D64207">
    <property type="entry name" value="D64207"/>
</dbReference>
<dbReference type="STRING" id="243273.MG_067"/>
<dbReference type="KEGG" id="mge:MG_067"/>
<dbReference type="HOGENOM" id="CLU_038569_1_0_14"/>
<dbReference type="InParanoid" id="P47313"/>
<dbReference type="Proteomes" id="UP000000807">
    <property type="component" value="Chromosome"/>
</dbReference>
<dbReference type="GO" id="GO:0005886">
    <property type="term" value="C:plasma membrane"/>
    <property type="evidence" value="ECO:0007669"/>
    <property type="project" value="UniProtKB-SubCell"/>
</dbReference>
<dbReference type="InterPro" id="IPR022382">
    <property type="entry name" value="Mycoplasma_peptidase_DUF31"/>
</dbReference>
<dbReference type="InterPro" id="IPR022381">
    <property type="entry name" value="Uncharacterised_MG067"/>
</dbReference>
<dbReference type="Pfam" id="PF01732">
    <property type="entry name" value="Mycop_pep_DUF31"/>
    <property type="match status" value="1"/>
</dbReference>
<dbReference type="PRINTS" id="PR00840">
    <property type="entry name" value="Y06768FAMILY"/>
</dbReference>
<dbReference type="PROSITE" id="PS51257">
    <property type="entry name" value="PROKAR_LIPOPROTEIN"/>
    <property type="match status" value="1"/>
</dbReference>
<name>Y067_MYCGE</name>
<reference key="1">
    <citation type="journal article" date="1995" name="Science">
        <title>The minimal gene complement of Mycoplasma genitalium.</title>
        <authorList>
            <person name="Fraser C.M."/>
            <person name="Gocayne J.D."/>
            <person name="White O."/>
            <person name="Adams M.D."/>
            <person name="Clayton R.A."/>
            <person name="Fleischmann R.D."/>
            <person name="Bult C.J."/>
            <person name="Kerlavage A.R."/>
            <person name="Sutton G.G."/>
            <person name="Kelley J.M."/>
            <person name="Fritchman J.L."/>
            <person name="Weidman J.F."/>
            <person name="Small K.V."/>
            <person name="Sandusky M."/>
            <person name="Fuhrmann J.L."/>
            <person name="Nguyen D.T."/>
            <person name="Utterback T.R."/>
            <person name="Saudek D.M."/>
            <person name="Phillips C.A."/>
            <person name="Merrick J.M."/>
            <person name="Tomb J.-F."/>
            <person name="Dougherty B.A."/>
            <person name="Bott K.F."/>
            <person name="Hu P.-C."/>
            <person name="Lucier T.S."/>
            <person name="Peterson S.N."/>
            <person name="Smith H.O."/>
            <person name="Hutchison C.A. III"/>
            <person name="Venter J.C."/>
        </authorList>
    </citation>
    <scope>NUCLEOTIDE SEQUENCE [LARGE SCALE GENOMIC DNA]</scope>
    <source>
        <strain>ATCC 33530 / DSM 19775 / NCTC 10195 / G37</strain>
    </source>
</reference>
<gene>
    <name type="ordered locus">MG067</name>
</gene>
<proteinExistence type="inferred from homology"/>
<accession>P47313</accession>
<sequence length="516" mass="59063">MLYRFWKTGLAIFMPGCILLSSCSFRSYIPTPSLRNTVGNHNSYVNNTVPKNNFYEKFYDLTFALNFTNQKTQEFGTGWLIDWKGDETKDLNTLTIASSSIISSVSNHSLKEKQDDKLFIAYIATNLHLIDGLKNDHDYQPYNKDGNGLSFPFDQKTQSFLLGRFANPKINSKPEEMNYQVQTRLKQDAMVFIQTSTLPKTAYAGIDPINFDYHETSDESGFWTKKQSTANFPRTRTLKSYADFAVLEVPLFLDNANDAKIYQEWIRPAVQAYKELGDVENIFAKTPYAEYINNTYYLLGYPVTNNNKYQFILGQDEKWKFSQQTSVLKHYQKQPLQQRTVYVERDDGLPTLTFNEDKLTHVQGTDLINVDQITDTNLGNGLINYAGLSRFTLSYHNVEYKLFGYGTILNNTNFPGGSSGSAVFNKEKQLTSIYFGSLINVTTGNNRNVNLGLGQILRTYNTNNSKHSAPSSYDLIFGDKNTIKFYAQFAKEKQTHLWNKIQTSVNSSISFYKDKK</sequence>
<feature type="signal peptide" evidence="1">
    <location>
        <begin position="1"/>
        <end position="22"/>
    </location>
</feature>
<feature type="chain" id="PRO_0000018735" description="Uncharacterized lipoprotein MG067">
    <location>
        <begin position="23"/>
        <end position="516"/>
    </location>
</feature>
<feature type="lipid moiety-binding region" description="N-palmitoyl cysteine" evidence="1">
    <location>
        <position position="23"/>
    </location>
</feature>
<feature type="lipid moiety-binding region" description="S-diacylglycerol cysteine" evidence="1">
    <location>
        <position position="23"/>
    </location>
</feature>